<name>CMOB_CITK8</name>
<reference key="1">
    <citation type="submission" date="2007-08" db="EMBL/GenBank/DDBJ databases">
        <authorList>
            <consortium name="The Citrobacter koseri Genome Sequencing Project"/>
            <person name="McClelland M."/>
            <person name="Sanderson E.K."/>
            <person name="Porwollik S."/>
            <person name="Spieth J."/>
            <person name="Clifton W.S."/>
            <person name="Latreille P."/>
            <person name="Courtney L."/>
            <person name="Wang C."/>
            <person name="Pepin K."/>
            <person name="Bhonagiri V."/>
            <person name="Nash W."/>
            <person name="Johnson M."/>
            <person name="Thiruvilangam P."/>
            <person name="Wilson R."/>
        </authorList>
    </citation>
    <scope>NUCLEOTIDE SEQUENCE [LARGE SCALE GENOMIC DNA]</scope>
    <source>
        <strain>ATCC BAA-895 / CDC 4225-83 / SGSC4696</strain>
    </source>
</reference>
<evidence type="ECO:0000255" key="1">
    <source>
        <dbReference type="HAMAP-Rule" id="MF_01590"/>
    </source>
</evidence>
<protein>
    <recommendedName>
        <fullName evidence="1">tRNA U34 carboxymethyltransferase</fullName>
        <ecNumber evidence="1">2.5.1.-</ecNumber>
    </recommendedName>
</protein>
<proteinExistence type="inferred from homology"/>
<feature type="chain" id="PRO_0000313909" description="tRNA U34 carboxymethyltransferase">
    <location>
        <begin position="1"/>
        <end position="322"/>
    </location>
</feature>
<feature type="binding site" evidence="1">
    <location>
        <position position="90"/>
    </location>
    <ligand>
        <name>carboxy-S-adenosyl-L-methionine</name>
        <dbReference type="ChEBI" id="CHEBI:134278"/>
    </ligand>
</feature>
<feature type="binding site" evidence="1">
    <location>
        <position position="104"/>
    </location>
    <ligand>
        <name>carboxy-S-adenosyl-L-methionine</name>
        <dbReference type="ChEBI" id="CHEBI:134278"/>
    </ligand>
</feature>
<feature type="binding site" evidence="1">
    <location>
        <position position="109"/>
    </location>
    <ligand>
        <name>carboxy-S-adenosyl-L-methionine</name>
        <dbReference type="ChEBI" id="CHEBI:134278"/>
    </ligand>
</feature>
<feature type="binding site" evidence="1">
    <location>
        <position position="129"/>
    </location>
    <ligand>
        <name>carboxy-S-adenosyl-L-methionine</name>
        <dbReference type="ChEBI" id="CHEBI:134278"/>
    </ligand>
</feature>
<feature type="binding site" evidence="1">
    <location>
        <begin position="151"/>
        <end position="153"/>
    </location>
    <ligand>
        <name>carboxy-S-adenosyl-L-methionine</name>
        <dbReference type="ChEBI" id="CHEBI:134278"/>
    </ligand>
</feature>
<feature type="binding site" evidence="1">
    <location>
        <begin position="180"/>
        <end position="181"/>
    </location>
    <ligand>
        <name>carboxy-S-adenosyl-L-methionine</name>
        <dbReference type="ChEBI" id="CHEBI:134278"/>
    </ligand>
</feature>
<feature type="binding site" evidence="1">
    <location>
        <position position="195"/>
    </location>
    <ligand>
        <name>carboxy-S-adenosyl-L-methionine</name>
        <dbReference type="ChEBI" id="CHEBI:134278"/>
    </ligand>
</feature>
<feature type="binding site" evidence="1">
    <location>
        <position position="199"/>
    </location>
    <ligand>
        <name>carboxy-S-adenosyl-L-methionine</name>
        <dbReference type="ChEBI" id="CHEBI:134278"/>
    </ligand>
</feature>
<feature type="binding site" evidence="1">
    <location>
        <position position="314"/>
    </location>
    <ligand>
        <name>carboxy-S-adenosyl-L-methionine</name>
        <dbReference type="ChEBI" id="CHEBI:134278"/>
    </ligand>
</feature>
<comment type="function">
    <text evidence="1">Catalyzes carboxymethyl transfer from carboxy-S-adenosyl-L-methionine (Cx-SAM) to 5-hydroxyuridine (ho5U) to form 5-carboxymethoxyuridine (cmo5U) at position 34 in tRNAs.</text>
</comment>
<comment type="catalytic activity">
    <reaction evidence="1">
        <text>carboxy-S-adenosyl-L-methionine + 5-hydroxyuridine(34) in tRNA = 5-carboxymethoxyuridine(34) in tRNA + S-adenosyl-L-homocysteine + H(+)</text>
        <dbReference type="Rhea" id="RHEA:52848"/>
        <dbReference type="Rhea" id="RHEA-COMP:13381"/>
        <dbReference type="Rhea" id="RHEA-COMP:13383"/>
        <dbReference type="ChEBI" id="CHEBI:15378"/>
        <dbReference type="ChEBI" id="CHEBI:57856"/>
        <dbReference type="ChEBI" id="CHEBI:134278"/>
        <dbReference type="ChEBI" id="CHEBI:136877"/>
        <dbReference type="ChEBI" id="CHEBI:136879"/>
    </reaction>
</comment>
<comment type="subunit">
    <text evidence="1">Homotetramer.</text>
</comment>
<comment type="similarity">
    <text evidence="1">Belongs to the class I-like SAM-binding methyltransferase superfamily. CmoB family.</text>
</comment>
<sequence>MIEFGNFYQLIAKSPLSHWLETLPAQIATWQRDQHGLFKQWSNAVEFLPELTPYRLDLLHSVTAESETPLSEGQLKRIDTLLRNLMPWRKGPFSLYGINIDTEWRSDWKWDRVLPHLSDLTGRTILDVGCGSGYHMWRMIGAGAHLAVGIDPTQLFLCQFEAVRKLLGNDQRAHLLPLGIEQLPALNTFDTVFSMGVLYHRRSPLEHLWQLKDQLVKDGELVLETLVVEGDENTVLVPGDRYAQMRNVYFIPSALALKNWLEKCGFVDVRIADVCVTSTEEQRRTGWMVTESLADFLDPNDHSKTVEGYPAPLRAVLIARKP</sequence>
<dbReference type="EC" id="2.5.1.-" evidence="1"/>
<dbReference type="EMBL" id="CP000822">
    <property type="protein sequence ID" value="ABV12233.1"/>
    <property type="molecule type" value="Genomic_DNA"/>
</dbReference>
<dbReference type="RefSeq" id="WP_012131987.1">
    <property type="nucleotide sequence ID" value="NC_009792.1"/>
</dbReference>
<dbReference type="SMR" id="A8AFH0"/>
<dbReference type="STRING" id="290338.CKO_01090"/>
<dbReference type="GeneID" id="45135239"/>
<dbReference type="KEGG" id="cko:CKO_01090"/>
<dbReference type="HOGENOM" id="CLU_052665_0_0_6"/>
<dbReference type="OrthoDB" id="9773188at2"/>
<dbReference type="Proteomes" id="UP000008148">
    <property type="component" value="Chromosome"/>
</dbReference>
<dbReference type="GO" id="GO:0016765">
    <property type="term" value="F:transferase activity, transferring alkyl or aryl (other than methyl) groups"/>
    <property type="evidence" value="ECO:0007669"/>
    <property type="project" value="UniProtKB-UniRule"/>
</dbReference>
<dbReference type="GO" id="GO:0002098">
    <property type="term" value="P:tRNA wobble uridine modification"/>
    <property type="evidence" value="ECO:0007669"/>
    <property type="project" value="InterPro"/>
</dbReference>
<dbReference type="CDD" id="cd02440">
    <property type="entry name" value="AdoMet_MTases"/>
    <property type="match status" value="1"/>
</dbReference>
<dbReference type="FunFam" id="3.40.50.150:FF:000080">
    <property type="entry name" value="tRNA U34 carboxymethyltransferase"/>
    <property type="match status" value="1"/>
</dbReference>
<dbReference type="Gene3D" id="3.40.50.150">
    <property type="entry name" value="Vaccinia Virus protein VP39"/>
    <property type="match status" value="1"/>
</dbReference>
<dbReference type="HAMAP" id="MF_01590">
    <property type="entry name" value="tRNA_carboxymethyltr_CmoB"/>
    <property type="match status" value="1"/>
</dbReference>
<dbReference type="InterPro" id="IPR010017">
    <property type="entry name" value="CmoB"/>
</dbReference>
<dbReference type="InterPro" id="IPR027555">
    <property type="entry name" value="Mo5U34_MeTrfas-like"/>
</dbReference>
<dbReference type="InterPro" id="IPR029063">
    <property type="entry name" value="SAM-dependent_MTases_sf"/>
</dbReference>
<dbReference type="NCBIfam" id="NF011650">
    <property type="entry name" value="PRK15068.1"/>
    <property type="match status" value="1"/>
</dbReference>
<dbReference type="NCBIfam" id="TIGR00452">
    <property type="entry name" value="tRNA 5-methoxyuridine(34)/uridine 5-oxyacetic acid(34) synthase CmoB"/>
    <property type="match status" value="1"/>
</dbReference>
<dbReference type="PANTHER" id="PTHR43861:SF3">
    <property type="entry name" value="PUTATIVE (AFU_ORTHOLOGUE AFUA_2G14390)-RELATED"/>
    <property type="match status" value="1"/>
</dbReference>
<dbReference type="PANTHER" id="PTHR43861">
    <property type="entry name" value="TRANS-ACONITATE 2-METHYLTRANSFERASE-RELATED"/>
    <property type="match status" value="1"/>
</dbReference>
<dbReference type="Pfam" id="PF08003">
    <property type="entry name" value="Methyltransf_9"/>
    <property type="match status" value="1"/>
</dbReference>
<dbReference type="SUPFAM" id="SSF53335">
    <property type="entry name" value="S-adenosyl-L-methionine-dependent methyltransferases"/>
    <property type="match status" value="1"/>
</dbReference>
<accession>A8AFH0</accession>
<organism>
    <name type="scientific">Citrobacter koseri (strain ATCC BAA-895 / CDC 4225-83 / SGSC4696)</name>
    <dbReference type="NCBI Taxonomy" id="290338"/>
    <lineage>
        <taxon>Bacteria</taxon>
        <taxon>Pseudomonadati</taxon>
        <taxon>Pseudomonadota</taxon>
        <taxon>Gammaproteobacteria</taxon>
        <taxon>Enterobacterales</taxon>
        <taxon>Enterobacteriaceae</taxon>
        <taxon>Citrobacter</taxon>
    </lineage>
</organism>
<gene>
    <name evidence="1" type="primary">cmoB</name>
    <name type="ordered locus">CKO_01090</name>
</gene>
<keyword id="KW-1185">Reference proteome</keyword>
<keyword id="KW-0808">Transferase</keyword>
<keyword id="KW-0819">tRNA processing</keyword>